<sequence length="141" mass="15583">MQLTSFTDYGLRALIYMASLPEGRMTSISEVTDVYGVSRNHMVKIINQLSRAGYVTAVRGKNGGIRLGKSASAIRIGDVVRELEPLSLVNCSSEFCHITPACRLKQALSKAVQSFLTELDNYTLADLVEENQPLYKLLLVE</sequence>
<keyword id="KW-0001">2Fe-2S</keyword>
<keyword id="KW-0238">DNA-binding</keyword>
<keyword id="KW-0408">Iron</keyword>
<keyword id="KW-0411">Iron-sulfur</keyword>
<keyword id="KW-0479">Metal-binding</keyword>
<keyword id="KW-0678">Repressor</keyword>
<keyword id="KW-0804">Transcription</keyword>
<keyword id="KW-0805">Transcription regulation</keyword>
<proteinExistence type="inferred from homology"/>
<gene>
    <name evidence="1" type="primary">nsrR</name>
    <name type="ordered locus">ECSE_4475</name>
</gene>
<protein>
    <recommendedName>
        <fullName evidence="1">HTH-type transcriptional repressor NsrR</fullName>
    </recommendedName>
</protein>
<name>NSRR_ECOSE</name>
<accession>B6I282</accession>
<evidence type="ECO:0000255" key="1">
    <source>
        <dbReference type="HAMAP-Rule" id="MF_01177"/>
    </source>
</evidence>
<feature type="chain" id="PRO_1000138121" description="HTH-type transcriptional repressor NsrR">
    <location>
        <begin position="1"/>
        <end position="141"/>
    </location>
</feature>
<feature type="domain" description="HTH rrf2-type" evidence="1">
    <location>
        <begin position="2"/>
        <end position="129"/>
    </location>
</feature>
<feature type="DNA-binding region" description="H-T-H motif" evidence="1">
    <location>
        <begin position="28"/>
        <end position="51"/>
    </location>
</feature>
<feature type="binding site" evidence="1">
    <location>
        <position position="91"/>
    </location>
    <ligand>
        <name>[2Fe-2S] cluster</name>
        <dbReference type="ChEBI" id="CHEBI:190135"/>
    </ligand>
</feature>
<feature type="binding site" evidence="1">
    <location>
        <position position="96"/>
    </location>
    <ligand>
        <name>[2Fe-2S] cluster</name>
        <dbReference type="ChEBI" id="CHEBI:190135"/>
    </ligand>
</feature>
<feature type="binding site" evidence="1">
    <location>
        <position position="102"/>
    </location>
    <ligand>
        <name>[2Fe-2S] cluster</name>
        <dbReference type="ChEBI" id="CHEBI:190135"/>
    </ligand>
</feature>
<comment type="function">
    <text evidence="1">Nitric oxide-sensitive repressor of genes involved in protecting the cell against nitrosative stress. May require iron for activity.</text>
</comment>
<comment type="cofactor">
    <cofactor evidence="1">
        <name>[2Fe-2S] cluster</name>
        <dbReference type="ChEBI" id="CHEBI:190135"/>
    </cofactor>
    <text evidence="1">Binds 1 [2Fe-2S] cluster per subunit.</text>
</comment>
<dbReference type="EMBL" id="AP009240">
    <property type="protein sequence ID" value="BAG79999.1"/>
    <property type="molecule type" value="Genomic_DNA"/>
</dbReference>
<dbReference type="RefSeq" id="WP_001177644.1">
    <property type="nucleotide sequence ID" value="NC_011415.1"/>
</dbReference>
<dbReference type="SMR" id="B6I282"/>
<dbReference type="GeneID" id="75202412"/>
<dbReference type="KEGG" id="ecy:ECSE_4475"/>
<dbReference type="HOGENOM" id="CLU_107144_2_1_6"/>
<dbReference type="Proteomes" id="UP000008199">
    <property type="component" value="Chromosome"/>
</dbReference>
<dbReference type="GO" id="GO:0005829">
    <property type="term" value="C:cytosol"/>
    <property type="evidence" value="ECO:0007669"/>
    <property type="project" value="TreeGrafter"/>
</dbReference>
<dbReference type="GO" id="GO:0051537">
    <property type="term" value="F:2 iron, 2 sulfur cluster binding"/>
    <property type="evidence" value="ECO:0007669"/>
    <property type="project" value="UniProtKB-KW"/>
</dbReference>
<dbReference type="GO" id="GO:0003700">
    <property type="term" value="F:DNA-binding transcription factor activity"/>
    <property type="evidence" value="ECO:0007669"/>
    <property type="project" value="UniProtKB-UniRule"/>
</dbReference>
<dbReference type="GO" id="GO:0003690">
    <property type="term" value="F:double-stranded DNA binding"/>
    <property type="evidence" value="ECO:0007669"/>
    <property type="project" value="UniProtKB-UniRule"/>
</dbReference>
<dbReference type="GO" id="GO:0005506">
    <property type="term" value="F:iron ion binding"/>
    <property type="evidence" value="ECO:0007669"/>
    <property type="project" value="UniProtKB-UniRule"/>
</dbReference>
<dbReference type="GO" id="GO:0045892">
    <property type="term" value="P:negative regulation of DNA-templated transcription"/>
    <property type="evidence" value="ECO:0007669"/>
    <property type="project" value="InterPro"/>
</dbReference>
<dbReference type="FunFam" id="1.10.10.10:FF:000105">
    <property type="entry name" value="HTH-type transcriptional repressor NsrR"/>
    <property type="match status" value="1"/>
</dbReference>
<dbReference type="Gene3D" id="1.10.10.10">
    <property type="entry name" value="Winged helix-like DNA-binding domain superfamily/Winged helix DNA-binding domain"/>
    <property type="match status" value="1"/>
</dbReference>
<dbReference type="HAMAP" id="MF_01177">
    <property type="entry name" value="HTH_type_NsrR"/>
    <property type="match status" value="1"/>
</dbReference>
<dbReference type="InterPro" id="IPR030489">
    <property type="entry name" value="TR_Rrf2-type_CS"/>
</dbReference>
<dbReference type="InterPro" id="IPR000944">
    <property type="entry name" value="Tscrpt_reg_Rrf2"/>
</dbReference>
<dbReference type="InterPro" id="IPR023761">
    <property type="entry name" value="Tscrpt_rep_HTH_NsrR"/>
</dbReference>
<dbReference type="InterPro" id="IPR036388">
    <property type="entry name" value="WH-like_DNA-bd_sf"/>
</dbReference>
<dbReference type="InterPro" id="IPR036390">
    <property type="entry name" value="WH_DNA-bd_sf"/>
</dbReference>
<dbReference type="NCBIfam" id="NF008240">
    <property type="entry name" value="PRK11014.1"/>
    <property type="match status" value="1"/>
</dbReference>
<dbReference type="NCBIfam" id="TIGR00738">
    <property type="entry name" value="rrf2_super"/>
    <property type="match status" value="1"/>
</dbReference>
<dbReference type="PANTHER" id="PTHR33221:SF4">
    <property type="entry name" value="HTH-TYPE TRANSCRIPTIONAL REPRESSOR NSRR"/>
    <property type="match status" value="1"/>
</dbReference>
<dbReference type="PANTHER" id="PTHR33221">
    <property type="entry name" value="WINGED HELIX-TURN-HELIX TRANSCRIPTIONAL REGULATOR, RRF2 FAMILY"/>
    <property type="match status" value="1"/>
</dbReference>
<dbReference type="Pfam" id="PF02082">
    <property type="entry name" value="Rrf2"/>
    <property type="match status" value="1"/>
</dbReference>
<dbReference type="SUPFAM" id="SSF46785">
    <property type="entry name" value="Winged helix' DNA-binding domain"/>
    <property type="match status" value="1"/>
</dbReference>
<dbReference type="PROSITE" id="PS01332">
    <property type="entry name" value="HTH_RRF2_1"/>
    <property type="match status" value="1"/>
</dbReference>
<dbReference type="PROSITE" id="PS51197">
    <property type="entry name" value="HTH_RRF2_2"/>
    <property type="match status" value="1"/>
</dbReference>
<reference key="1">
    <citation type="journal article" date="2008" name="DNA Res.">
        <title>Complete genome sequence and comparative analysis of the wild-type commensal Escherichia coli strain SE11 isolated from a healthy adult.</title>
        <authorList>
            <person name="Oshima K."/>
            <person name="Toh H."/>
            <person name="Ogura Y."/>
            <person name="Sasamoto H."/>
            <person name="Morita H."/>
            <person name="Park S.-H."/>
            <person name="Ooka T."/>
            <person name="Iyoda S."/>
            <person name="Taylor T.D."/>
            <person name="Hayashi T."/>
            <person name="Itoh K."/>
            <person name="Hattori M."/>
        </authorList>
    </citation>
    <scope>NUCLEOTIDE SEQUENCE [LARGE SCALE GENOMIC DNA]</scope>
    <source>
        <strain>SE11</strain>
    </source>
</reference>
<organism>
    <name type="scientific">Escherichia coli (strain SE11)</name>
    <dbReference type="NCBI Taxonomy" id="409438"/>
    <lineage>
        <taxon>Bacteria</taxon>
        <taxon>Pseudomonadati</taxon>
        <taxon>Pseudomonadota</taxon>
        <taxon>Gammaproteobacteria</taxon>
        <taxon>Enterobacterales</taxon>
        <taxon>Enterobacteriaceae</taxon>
        <taxon>Escherichia</taxon>
    </lineage>
</organism>